<protein>
    <recommendedName>
        <fullName evidence="1">ATP synthase subunit beta</fullName>
        <ecNumber evidence="1">7.1.2.2</ecNumber>
    </recommendedName>
    <alternativeName>
        <fullName evidence="1">ATP synthase F1 sector subunit beta</fullName>
    </alternativeName>
    <alternativeName>
        <fullName evidence="1">F-ATPase subunit beta</fullName>
    </alternativeName>
</protein>
<evidence type="ECO:0000255" key="1">
    <source>
        <dbReference type="HAMAP-Rule" id="MF_01347"/>
    </source>
</evidence>
<organism>
    <name type="scientific">Lactobacillus johnsonii (strain CNCM I-12250 / La1 / NCC 533)</name>
    <dbReference type="NCBI Taxonomy" id="257314"/>
    <lineage>
        <taxon>Bacteria</taxon>
        <taxon>Bacillati</taxon>
        <taxon>Bacillota</taxon>
        <taxon>Bacilli</taxon>
        <taxon>Lactobacillales</taxon>
        <taxon>Lactobacillaceae</taxon>
        <taxon>Lactobacillus</taxon>
    </lineage>
</organism>
<dbReference type="EC" id="7.1.2.2" evidence="1"/>
<dbReference type="EMBL" id="AE017198">
    <property type="protein sequence ID" value="AAS08761.1"/>
    <property type="molecule type" value="Genomic_DNA"/>
</dbReference>
<dbReference type="RefSeq" id="WP_011161822.1">
    <property type="nucleotide sequence ID" value="NC_005362.1"/>
</dbReference>
<dbReference type="SMR" id="Q74K15"/>
<dbReference type="KEGG" id="ljo:LJ_0940"/>
<dbReference type="PATRIC" id="fig|257314.6.peg.797"/>
<dbReference type="eggNOG" id="COG0055">
    <property type="taxonomic scope" value="Bacteria"/>
</dbReference>
<dbReference type="HOGENOM" id="CLU_022398_0_2_9"/>
<dbReference type="Proteomes" id="UP000000581">
    <property type="component" value="Chromosome"/>
</dbReference>
<dbReference type="GO" id="GO:0005886">
    <property type="term" value="C:plasma membrane"/>
    <property type="evidence" value="ECO:0007669"/>
    <property type="project" value="UniProtKB-SubCell"/>
</dbReference>
<dbReference type="GO" id="GO:0045259">
    <property type="term" value="C:proton-transporting ATP synthase complex"/>
    <property type="evidence" value="ECO:0007669"/>
    <property type="project" value="UniProtKB-KW"/>
</dbReference>
<dbReference type="GO" id="GO:0005524">
    <property type="term" value="F:ATP binding"/>
    <property type="evidence" value="ECO:0007669"/>
    <property type="project" value="UniProtKB-UniRule"/>
</dbReference>
<dbReference type="GO" id="GO:0016887">
    <property type="term" value="F:ATP hydrolysis activity"/>
    <property type="evidence" value="ECO:0007669"/>
    <property type="project" value="InterPro"/>
</dbReference>
<dbReference type="GO" id="GO:0046933">
    <property type="term" value="F:proton-transporting ATP synthase activity, rotational mechanism"/>
    <property type="evidence" value="ECO:0007669"/>
    <property type="project" value="UniProtKB-UniRule"/>
</dbReference>
<dbReference type="CDD" id="cd18110">
    <property type="entry name" value="ATP-synt_F1_beta_C"/>
    <property type="match status" value="1"/>
</dbReference>
<dbReference type="CDD" id="cd18115">
    <property type="entry name" value="ATP-synt_F1_beta_N"/>
    <property type="match status" value="1"/>
</dbReference>
<dbReference type="CDD" id="cd01133">
    <property type="entry name" value="F1-ATPase_beta_CD"/>
    <property type="match status" value="1"/>
</dbReference>
<dbReference type="FunFam" id="1.10.1140.10:FF:000001">
    <property type="entry name" value="ATP synthase subunit beta"/>
    <property type="match status" value="1"/>
</dbReference>
<dbReference type="FunFam" id="2.40.10.170:FF:000005">
    <property type="entry name" value="ATP synthase subunit beta"/>
    <property type="match status" value="1"/>
</dbReference>
<dbReference type="FunFam" id="3.40.50.300:FF:000004">
    <property type="entry name" value="ATP synthase subunit beta"/>
    <property type="match status" value="1"/>
</dbReference>
<dbReference type="Gene3D" id="2.40.10.170">
    <property type="match status" value="1"/>
</dbReference>
<dbReference type="Gene3D" id="1.10.1140.10">
    <property type="entry name" value="Bovine Mitochondrial F1-atpase, Atp Synthase Beta Chain, Chain D, domain 3"/>
    <property type="match status" value="1"/>
</dbReference>
<dbReference type="Gene3D" id="3.40.50.300">
    <property type="entry name" value="P-loop containing nucleotide triphosphate hydrolases"/>
    <property type="match status" value="1"/>
</dbReference>
<dbReference type="HAMAP" id="MF_01347">
    <property type="entry name" value="ATP_synth_beta_bact"/>
    <property type="match status" value="1"/>
</dbReference>
<dbReference type="InterPro" id="IPR003593">
    <property type="entry name" value="AAA+_ATPase"/>
</dbReference>
<dbReference type="InterPro" id="IPR055190">
    <property type="entry name" value="ATP-synt_VA_C"/>
</dbReference>
<dbReference type="InterPro" id="IPR005722">
    <property type="entry name" value="ATP_synth_F1_bsu"/>
</dbReference>
<dbReference type="InterPro" id="IPR020003">
    <property type="entry name" value="ATPase_a/bsu_AS"/>
</dbReference>
<dbReference type="InterPro" id="IPR050053">
    <property type="entry name" value="ATPase_alpha/beta_chains"/>
</dbReference>
<dbReference type="InterPro" id="IPR004100">
    <property type="entry name" value="ATPase_F1/V1/A1_a/bsu_N"/>
</dbReference>
<dbReference type="InterPro" id="IPR036121">
    <property type="entry name" value="ATPase_F1/V1/A1_a/bsu_N_sf"/>
</dbReference>
<dbReference type="InterPro" id="IPR000194">
    <property type="entry name" value="ATPase_F1/V1/A1_a/bsu_nucl-bd"/>
</dbReference>
<dbReference type="InterPro" id="IPR024034">
    <property type="entry name" value="ATPase_F1/V1_b/a_C"/>
</dbReference>
<dbReference type="InterPro" id="IPR027417">
    <property type="entry name" value="P-loop_NTPase"/>
</dbReference>
<dbReference type="NCBIfam" id="TIGR01039">
    <property type="entry name" value="atpD"/>
    <property type="match status" value="1"/>
</dbReference>
<dbReference type="PANTHER" id="PTHR15184">
    <property type="entry name" value="ATP SYNTHASE"/>
    <property type="match status" value="1"/>
</dbReference>
<dbReference type="PANTHER" id="PTHR15184:SF71">
    <property type="entry name" value="ATP SYNTHASE SUBUNIT BETA, MITOCHONDRIAL"/>
    <property type="match status" value="1"/>
</dbReference>
<dbReference type="Pfam" id="PF00006">
    <property type="entry name" value="ATP-synt_ab"/>
    <property type="match status" value="1"/>
</dbReference>
<dbReference type="Pfam" id="PF02874">
    <property type="entry name" value="ATP-synt_ab_N"/>
    <property type="match status" value="1"/>
</dbReference>
<dbReference type="Pfam" id="PF22919">
    <property type="entry name" value="ATP-synt_VA_C"/>
    <property type="match status" value="1"/>
</dbReference>
<dbReference type="SMART" id="SM00382">
    <property type="entry name" value="AAA"/>
    <property type="match status" value="1"/>
</dbReference>
<dbReference type="SUPFAM" id="SSF47917">
    <property type="entry name" value="C-terminal domain of alpha and beta subunits of F1 ATP synthase"/>
    <property type="match status" value="1"/>
</dbReference>
<dbReference type="SUPFAM" id="SSF50615">
    <property type="entry name" value="N-terminal domain of alpha and beta subunits of F1 ATP synthase"/>
    <property type="match status" value="1"/>
</dbReference>
<dbReference type="SUPFAM" id="SSF52540">
    <property type="entry name" value="P-loop containing nucleoside triphosphate hydrolases"/>
    <property type="match status" value="1"/>
</dbReference>
<dbReference type="PROSITE" id="PS00152">
    <property type="entry name" value="ATPASE_ALPHA_BETA"/>
    <property type="match status" value="1"/>
</dbReference>
<gene>
    <name evidence="1" type="primary">atpD</name>
    <name type="ordered locus">LJ_0940</name>
</gene>
<feature type="chain" id="PRO_0000254280" description="ATP synthase subunit beta">
    <location>
        <begin position="1"/>
        <end position="480"/>
    </location>
</feature>
<feature type="binding site" evidence="1">
    <location>
        <begin position="153"/>
        <end position="160"/>
    </location>
    <ligand>
        <name>ATP</name>
        <dbReference type="ChEBI" id="CHEBI:30616"/>
    </ligand>
</feature>
<keyword id="KW-0066">ATP synthesis</keyword>
<keyword id="KW-0067">ATP-binding</keyword>
<keyword id="KW-1003">Cell membrane</keyword>
<keyword id="KW-0139">CF(1)</keyword>
<keyword id="KW-0375">Hydrogen ion transport</keyword>
<keyword id="KW-0406">Ion transport</keyword>
<keyword id="KW-0472">Membrane</keyword>
<keyword id="KW-0547">Nucleotide-binding</keyword>
<keyword id="KW-1278">Translocase</keyword>
<keyword id="KW-0813">Transport</keyword>
<reference key="1">
    <citation type="journal article" date="2004" name="Proc. Natl. Acad. Sci. U.S.A.">
        <title>The genome sequence of the probiotic intestinal bacterium Lactobacillus johnsonii NCC 533.</title>
        <authorList>
            <person name="Pridmore R.D."/>
            <person name="Berger B."/>
            <person name="Desiere F."/>
            <person name="Vilanova D."/>
            <person name="Barretto C."/>
            <person name="Pittet A.-C."/>
            <person name="Zwahlen M.-C."/>
            <person name="Rouvet M."/>
            <person name="Altermann E."/>
            <person name="Barrangou R."/>
            <person name="Mollet B."/>
            <person name="Mercenier A."/>
            <person name="Klaenhammer T."/>
            <person name="Arigoni F."/>
            <person name="Schell M.A."/>
        </authorList>
    </citation>
    <scope>NUCLEOTIDE SEQUENCE [LARGE SCALE GENOMIC DNA]</scope>
    <source>
        <strain>CNCM I-1225 / La1 / NCC 533</strain>
    </source>
</reference>
<sequence>MSKGEIVQVIGPVVDVEFPLDKDLPDINNALRVTNNNGDTLVLEVTLELGDGVLRTISMESTDGLRRGMEVEDTGAPISVPVGKDTLGRVFNVLGDPIDGGPALGKDVKREGIHKEAPKYDELSTSEEILETGIKVIDLLEPYVRGGKVGLFGGAGVGKTTIIQELIHNIAQEHGGISVFTGVGERTREGNDLYFEMKASGVLSKTAMVFGQMNEPPGARMRVALTGLTIAEYFRDVEGLDVLLFIDNIFRFTQAGSEVSALLGRMPSAVGYQPTLATEMGQLQERITSTKKGSITSIQAVYVPADDYTDPAPATTFAHLDATTNLERRLVEQGIYPAVDPLESTSSALDPEIVGEEHYEVAVKVQHILQRYQELQDIISVLGMDELSDDEKLIVERARKIQFFLSQNFFVAEQFTGIPGSYVPIKETIKGFKMIIDGKLDDLPEDAFRNVGPIEDVIKQAEKMGVTPKNPEAKAILEAK</sequence>
<name>ATPB_LACJO</name>
<accession>Q74K15</accession>
<proteinExistence type="inferred from homology"/>
<comment type="function">
    <text evidence="1">Produces ATP from ADP in the presence of a proton gradient across the membrane. The catalytic sites are hosted primarily by the beta subunits.</text>
</comment>
<comment type="catalytic activity">
    <reaction evidence="1">
        <text>ATP + H2O + 4 H(+)(in) = ADP + phosphate + 5 H(+)(out)</text>
        <dbReference type="Rhea" id="RHEA:57720"/>
        <dbReference type="ChEBI" id="CHEBI:15377"/>
        <dbReference type="ChEBI" id="CHEBI:15378"/>
        <dbReference type="ChEBI" id="CHEBI:30616"/>
        <dbReference type="ChEBI" id="CHEBI:43474"/>
        <dbReference type="ChEBI" id="CHEBI:456216"/>
        <dbReference type="EC" id="7.1.2.2"/>
    </reaction>
</comment>
<comment type="subunit">
    <text evidence="1">F-type ATPases have 2 components, CF(1) - the catalytic core - and CF(0) - the membrane proton channel. CF(1) has five subunits: alpha(3), beta(3), gamma(1), delta(1), epsilon(1). CF(0) has three main subunits: a(1), b(2) and c(9-12). The alpha and beta chains form an alternating ring which encloses part of the gamma chain. CF(1) is attached to CF(0) by a central stalk formed by the gamma and epsilon chains, while a peripheral stalk is formed by the delta and b chains.</text>
</comment>
<comment type="subcellular location">
    <subcellularLocation>
        <location evidence="1">Cell membrane</location>
        <topology evidence="1">Peripheral membrane protein</topology>
    </subcellularLocation>
</comment>
<comment type="similarity">
    <text evidence="1">Belongs to the ATPase alpha/beta chains family.</text>
</comment>